<protein>
    <recommendedName>
        <fullName evidence="1">Kynurenine formamidase</fullName>
        <shortName evidence="1">KFA</shortName>
        <shortName evidence="1">KFase</shortName>
        <ecNumber evidence="1">3.5.1.9</ecNumber>
    </recommendedName>
    <alternativeName>
        <fullName evidence="1">Arylformamidase</fullName>
    </alternativeName>
    <alternativeName>
        <fullName evidence="1">N-formylkynurenine formamidase</fullName>
        <shortName evidence="1">FKF</shortName>
    </alternativeName>
</protein>
<organism>
    <name type="scientific">Burkholderia pseudomallei (strain 1106a)</name>
    <dbReference type="NCBI Taxonomy" id="357348"/>
    <lineage>
        <taxon>Bacteria</taxon>
        <taxon>Pseudomonadati</taxon>
        <taxon>Pseudomonadota</taxon>
        <taxon>Betaproteobacteria</taxon>
        <taxon>Burkholderiales</taxon>
        <taxon>Burkholderiaceae</taxon>
        <taxon>Burkholderia</taxon>
        <taxon>pseudomallei group</taxon>
    </lineage>
</organism>
<sequence>MDTIWDISPPIAPATPVWPGDTPVGIERVWRIEAGSPVNVARVTLSPHTGAHADAPLHYDADGAPIGAVPLDAYLGRCRVIHCIGARSAVTPEHVRAALAGAPPRVLLRTYGQAPQHAWDSAFCAVAPETIDLLAAHGVRLVGIDTPSLDPQESKTMDAHRRIRAHRMAILEGLVLDEIAAGDYELIALPLKFATLDASPVRAVLRALPDAPR</sequence>
<feature type="chain" id="PRO_0000362110" description="Kynurenine formamidase">
    <location>
        <begin position="1"/>
        <end position="213"/>
    </location>
</feature>
<feature type="active site" description="Proton donor/acceptor" evidence="1">
    <location>
        <position position="58"/>
    </location>
</feature>
<feature type="binding site" evidence="1">
    <location>
        <position position="18"/>
    </location>
    <ligand>
        <name>substrate</name>
    </ligand>
</feature>
<feature type="binding site" evidence="1">
    <location>
        <position position="48"/>
    </location>
    <ligand>
        <name>Zn(2+)</name>
        <dbReference type="ChEBI" id="CHEBI:29105"/>
        <label>1</label>
    </ligand>
</feature>
<feature type="binding site" evidence="1">
    <location>
        <position position="52"/>
    </location>
    <ligand>
        <name>Zn(2+)</name>
        <dbReference type="ChEBI" id="CHEBI:29105"/>
        <label>1</label>
    </ligand>
</feature>
<feature type="binding site" evidence="1">
    <location>
        <position position="54"/>
    </location>
    <ligand>
        <name>Zn(2+)</name>
        <dbReference type="ChEBI" id="CHEBI:29105"/>
        <label>1</label>
    </ligand>
</feature>
<feature type="binding site" evidence="1">
    <location>
        <position position="54"/>
    </location>
    <ligand>
        <name>Zn(2+)</name>
        <dbReference type="ChEBI" id="CHEBI:29105"/>
        <label>2</label>
    </ligand>
</feature>
<feature type="binding site" evidence="1">
    <location>
        <position position="160"/>
    </location>
    <ligand>
        <name>Zn(2+)</name>
        <dbReference type="ChEBI" id="CHEBI:29105"/>
        <label>2</label>
    </ligand>
</feature>
<feature type="binding site" evidence="1">
    <location>
        <position position="172"/>
    </location>
    <ligand>
        <name>Zn(2+)</name>
        <dbReference type="ChEBI" id="CHEBI:29105"/>
        <label>1</label>
    </ligand>
</feature>
<feature type="binding site" evidence="1">
    <location>
        <position position="172"/>
    </location>
    <ligand>
        <name>Zn(2+)</name>
        <dbReference type="ChEBI" id="CHEBI:29105"/>
        <label>2</label>
    </ligand>
</feature>
<name>KYNB_BURP0</name>
<accession>A3NS57</accession>
<comment type="function">
    <text evidence="1">Catalyzes the hydrolysis of N-formyl-L-kynurenine to L-kynurenine, the second step in the kynurenine pathway of tryptophan degradation.</text>
</comment>
<comment type="catalytic activity">
    <reaction evidence="1">
        <text>N-formyl-L-kynurenine + H2O = L-kynurenine + formate + H(+)</text>
        <dbReference type="Rhea" id="RHEA:13009"/>
        <dbReference type="ChEBI" id="CHEBI:15377"/>
        <dbReference type="ChEBI" id="CHEBI:15378"/>
        <dbReference type="ChEBI" id="CHEBI:15740"/>
        <dbReference type="ChEBI" id="CHEBI:57959"/>
        <dbReference type="ChEBI" id="CHEBI:58629"/>
        <dbReference type="EC" id="3.5.1.9"/>
    </reaction>
</comment>
<comment type="cofactor">
    <cofactor evidence="1">
        <name>Zn(2+)</name>
        <dbReference type="ChEBI" id="CHEBI:29105"/>
    </cofactor>
    <text evidence="1">Binds 2 zinc ions per subunit.</text>
</comment>
<comment type="pathway">
    <text evidence="1">Amino-acid degradation; L-tryptophan degradation via kynurenine pathway; L-kynurenine from L-tryptophan: step 2/2.</text>
</comment>
<comment type="subunit">
    <text evidence="1">Homodimer.</text>
</comment>
<comment type="similarity">
    <text evidence="1">Belongs to the Cyclase 1 superfamily. KynB family.</text>
</comment>
<comment type="sequence caution" evidence="2">
    <conflict type="erroneous initiation">
        <sequence resource="EMBL-CDS" id="ABN90793"/>
    </conflict>
</comment>
<keyword id="KW-0378">Hydrolase</keyword>
<keyword id="KW-0479">Metal-binding</keyword>
<keyword id="KW-0823">Tryptophan catabolism</keyword>
<keyword id="KW-0862">Zinc</keyword>
<reference key="1">
    <citation type="journal article" date="2010" name="Genome Biol. Evol.">
        <title>Continuing evolution of Burkholderia mallei through genome reduction and large-scale rearrangements.</title>
        <authorList>
            <person name="Losada L."/>
            <person name="Ronning C.M."/>
            <person name="DeShazer D."/>
            <person name="Woods D."/>
            <person name="Fedorova N."/>
            <person name="Kim H.S."/>
            <person name="Shabalina S.A."/>
            <person name="Pearson T.R."/>
            <person name="Brinkac L."/>
            <person name="Tan P."/>
            <person name="Nandi T."/>
            <person name="Crabtree J."/>
            <person name="Badger J."/>
            <person name="Beckstrom-Sternberg S."/>
            <person name="Saqib M."/>
            <person name="Schutzer S.E."/>
            <person name="Keim P."/>
            <person name="Nierman W.C."/>
        </authorList>
    </citation>
    <scope>NUCLEOTIDE SEQUENCE [LARGE SCALE GENOMIC DNA]</scope>
    <source>
        <strain>1106a</strain>
    </source>
</reference>
<proteinExistence type="inferred from homology"/>
<gene>
    <name evidence="1" type="primary">kynB</name>
    <name type="ordered locus">BURPS1106A_0897</name>
</gene>
<evidence type="ECO:0000255" key="1">
    <source>
        <dbReference type="HAMAP-Rule" id="MF_01969"/>
    </source>
</evidence>
<evidence type="ECO:0000305" key="2"/>
<dbReference type="EC" id="3.5.1.9" evidence="1"/>
<dbReference type="EMBL" id="CP000572">
    <property type="protein sequence ID" value="ABN90793.1"/>
    <property type="status" value="ALT_INIT"/>
    <property type="molecule type" value="Genomic_DNA"/>
</dbReference>
<dbReference type="RefSeq" id="WP_004556754.1">
    <property type="nucleotide sequence ID" value="NC_009076.1"/>
</dbReference>
<dbReference type="SMR" id="A3NS57"/>
<dbReference type="KEGG" id="bpl:BURPS1106A_0897"/>
<dbReference type="HOGENOM" id="CLU_030671_3_1_4"/>
<dbReference type="UniPathway" id="UPA00333">
    <property type="reaction ID" value="UER00454"/>
</dbReference>
<dbReference type="Proteomes" id="UP000006738">
    <property type="component" value="Chromosome I"/>
</dbReference>
<dbReference type="GO" id="GO:0004061">
    <property type="term" value="F:arylformamidase activity"/>
    <property type="evidence" value="ECO:0000250"/>
    <property type="project" value="UniProtKB"/>
</dbReference>
<dbReference type="GO" id="GO:0004328">
    <property type="term" value="F:formamidase activity"/>
    <property type="evidence" value="ECO:0007669"/>
    <property type="project" value="InterPro"/>
</dbReference>
<dbReference type="GO" id="GO:0008270">
    <property type="term" value="F:zinc ion binding"/>
    <property type="evidence" value="ECO:0007669"/>
    <property type="project" value="UniProtKB-UniRule"/>
</dbReference>
<dbReference type="GO" id="GO:0043420">
    <property type="term" value="P:anthranilate metabolic process"/>
    <property type="evidence" value="ECO:0000250"/>
    <property type="project" value="UniProtKB"/>
</dbReference>
<dbReference type="GO" id="GO:0019441">
    <property type="term" value="P:L-tryptophan catabolic process to kynurenine"/>
    <property type="evidence" value="ECO:0000250"/>
    <property type="project" value="UniProtKB"/>
</dbReference>
<dbReference type="FunFam" id="3.50.30.50:FF:000001">
    <property type="entry name" value="Kynurenine formamidase"/>
    <property type="match status" value="1"/>
</dbReference>
<dbReference type="Gene3D" id="3.50.30.50">
    <property type="entry name" value="Putative cyclase"/>
    <property type="match status" value="1"/>
</dbReference>
<dbReference type="HAMAP" id="MF_01969">
    <property type="entry name" value="KynB"/>
    <property type="match status" value="1"/>
</dbReference>
<dbReference type="InterPro" id="IPR007325">
    <property type="entry name" value="KFase/CYL"/>
</dbReference>
<dbReference type="InterPro" id="IPR037175">
    <property type="entry name" value="KFase_sf"/>
</dbReference>
<dbReference type="InterPro" id="IPR017484">
    <property type="entry name" value="Kynurenine_formamidase_bac"/>
</dbReference>
<dbReference type="NCBIfam" id="TIGR03035">
    <property type="entry name" value="trp_arylform"/>
    <property type="match status" value="1"/>
</dbReference>
<dbReference type="PANTHER" id="PTHR31118">
    <property type="entry name" value="CYCLASE-LIKE PROTEIN 2"/>
    <property type="match status" value="1"/>
</dbReference>
<dbReference type="PANTHER" id="PTHR31118:SF32">
    <property type="entry name" value="KYNURENINE FORMAMIDASE"/>
    <property type="match status" value="1"/>
</dbReference>
<dbReference type="Pfam" id="PF04199">
    <property type="entry name" value="Cyclase"/>
    <property type="match status" value="1"/>
</dbReference>
<dbReference type="SUPFAM" id="SSF102198">
    <property type="entry name" value="Putative cyclase"/>
    <property type="match status" value="1"/>
</dbReference>